<proteinExistence type="inferred from homology"/>
<gene>
    <name evidence="1" type="primary">rpoC</name>
    <name type="ordered locus">CLI_3670</name>
</gene>
<accession>A7GJ81</accession>
<name>RPOC_CLOBL</name>
<sequence>MFELNNFDALQIGLASPEKIREWSRGEVKKPETINYRTLKPERDGLFCERIFGPMKDWECHCGKYKRIRYKGIVCDRCGVEVTKAKVRRERMGHIELAAPVSHIWYFKGIPSRMGLILDMSPRALEKVLYFASYVVLDPKETPLLKKQLLNEKEYRESIDKYGDDSFVAAMGAEAVKTLLDEIDLEQSSIELKEELKTSTGQKKIRIIRRLEVVESFRKSGNRPDWMVIDVIPVIPPDLRPMVQLDGGRFATSDLNDLYRRVINRNNRLKKLLDLGAPDIIVRNEKRMLQEAVDALIDNGRRGRPVTGPGNRPLKSLSDMLKGKQGRFRQNLLGKRVDYSGRSVIVVGPELKMYQCGLPKEMALELFKPFVMKKLVQNGLAHNIKSAKRMVERVQPQVWDVLEEVISDHPVLLNRAPTLHRLGIQAFQPVLVEGRAIKLHPLVCTAYNADFDGDQMAVHVPLSVEAQAEARFLMLAAHNILKPSDGKPVSVPTQDMVLGSYYLTMDKDGVKGEGKVFSCPEEVLMAYQCKAVDIHAKIKVRLKKVIDGETIEGIIETTPGKIIFNESIPQDLGYIDRTIPENKLKLEVDFLVSKKTLGGIITKCYMKHGATKTSIMLDKIKAKGYHYSTIGAITISTSDMVVPESKRELLENTEKQVEKIQKMYRRGFISEEERYEKVIDLWTKTTEDVANALMESLDSFNPIYMMADSGARGSKSQIKQLAGMRGLMANPSGKILELPIKASFREGLDVLEYFISTHGARKGNADTALKTADSGYLTRRLVDVSQDVIVRQEDCGTEEGYEVSEIKEGNEVIEPLVERLSGRYPSEDIIHPTTGEVIVKRNTYMDEDIAQKVSDAGIKKVKIRSVFTCKSKHGVCARCYGMNMGTSQKIHIGEAVGIVAAQSIGEPGTQLTMRTFHTGGVAGADITQGLPRVEELFEARKPKGLAIVSEVSGTVKMEETKKKRTIIVVTDDGEEVSYDIPFGSRIKVKNGDIISAGDEITEGSINPHDILRIKGVDGVKNYLLSEVQKVYRLQGVDINDKHLEVVIRQMTRKIKIEDSGDTELLPGTMIDVFDFEEANREILEKGGEPAVGRIALLGITKAALATDSFLSAASFQETTRVLTDAAIKGKIDPLLGLKENVIIGKLIPAGTGMTRYRSIQINTDDENIEEDSMDSMEV</sequence>
<comment type="function">
    <text evidence="1">DNA-dependent RNA polymerase catalyzes the transcription of DNA into RNA using the four ribonucleoside triphosphates as substrates.</text>
</comment>
<comment type="catalytic activity">
    <reaction evidence="1">
        <text>RNA(n) + a ribonucleoside 5'-triphosphate = RNA(n+1) + diphosphate</text>
        <dbReference type="Rhea" id="RHEA:21248"/>
        <dbReference type="Rhea" id="RHEA-COMP:14527"/>
        <dbReference type="Rhea" id="RHEA-COMP:17342"/>
        <dbReference type="ChEBI" id="CHEBI:33019"/>
        <dbReference type="ChEBI" id="CHEBI:61557"/>
        <dbReference type="ChEBI" id="CHEBI:140395"/>
        <dbReference type="EC" id="2.7.7.6"/>
    </reaction>
</comment>
<comment type="cofactor">
    <cofactor evidence="1">
        <name>Mg(2+)</name>
        <dbReference type="ChEBI" id="CHEBI:18420"/>
    </cofactor>
    <text evidence="1">Binds 1 Mg(2+) ion per subunit.</text>
</comment>
<comment type="cofactor">
    <cofactor evidence="1">
        <name>Zn(2+)</name>
        <dbReference type="ChEBI" id="CHEBI:29105"/>
    </cofactor>
    <text evidence="1">Binds 2 Zn(2+) ions per subunit.</text>
</comment>
<comment type="subunit">
    <text evidence="1">The RNAP catalytic core consists of 2 alpha, 1 beta, 1 beta' and 1 omega subunit. When a sigma factor is associated with the core the holoenzyme is formed, which can initiate transcription.</text>
</comment>
<comment type="similarity">
    <text evidence="1">Belongs to the RNA polymerase beta' chain family.</text>
</comment>
<keyword id="KW-0240">DNA-directed RNA polymerase</keyword>
<keyword id="KW-0460">Magnesium</keyword>
<keyword id="KW-0479">Metal-binding</keyword>
<keyword id="KW-0548">Nucleotidyltransferase</keyword>
<keyword id="KW-0804">Transcription</keyword>
<keyword id="KW-0808">Transferase</keyword>
<keyword id="KW-0862">Zinc</keyword>
<protein>
    <recommendedName>
        <fullName evidence="1">DNA-directed RNA polymerase subunit beta'</fullName>
        <shortName evidence="1">RNAP subunit beta'</shortName>
        <ecNumber evidence="1">2.7.7.6</ecNumber>
    </recommendedName>
    <alternativeName>
        <fullName evidence="1">RNA polymerase subunit beta'</fullName>
    </alternativeName>
    <alternativeName>
        <fullName evidence="1">Transcriptase subunit beta'</fullName>
    </alternativeName>
</protein>
<evidence type="ECO:0000255" key="1">
    <source>
        <dbReference type="HAMAP-Rule" id="MF_01322"/>
    </source>
</evidence>
<organism>
    <name type="scientific">Clostridium botulinum (strain Langeland / NCTC 10281 / Type F)</name>
    <dbReference type="NCBI Taxonomy" id="441772"/>
    <lineage>
        <taxon>Bacteria</taxon>
        <taxon>Bacillati</taxon>
        <taxon>Bacillota</taxon>
        <taxon>Clostridia</taxon>
        <taxon>Eubacteriales</taxon>
        <taxon>Clostridiaceae</taxon>
        <taxon>Clostridium</taxon>
    </lineage>
</organism>
<feature type="chain" id="PRO_0000353332" description="DNA-directed RNA polymerase subunit beta'">
    <location>
        <begin position="1"/>
        <end position="1178"/>
    </location>
</feature>
<feature type="binding site" evidence="1">
    <location>
        <position position="60"/>
    </location>
    <ligand>
        <name>Zn(2+)</name>
        <dbReference type="ChEBI" id="CHEBI:29105"/>
        <label>1</label>
    </ligand>
</feature>
<feature type="binding site" evidence="1">
    <location>
        <position position="62"/>
    </location>
    <ligand>
        <name>Zn(2+)</name>
        <dbReference type="ChEBI" id="CHEBI:29105"/>
        <label>1</label>
    </ligand>
</feature>
<feature type="binding site" evidence="1">
    <location>
        <position position="75"/>
    </location>
    <ligand>
        <name>Zn(2+)</name>
        <dbReference type="ChEBI" id="CHEBI:29105"/>
        <label>1</label>
    </ligand>
</feature>
<feature type="binding site" evidence="1">
    <location>
        <position position="78"/>
    </location>
    <ligand>
        <name>Zn(2+)</name>
        <dbReference type="ChEBI" id="CHEBI:29105"/>
        <label>1</label>
    </ligand>
</feature>
<feature type="binding site" evidence="1">
    <location>
        <position position="450"/>
    </location>
    <ligand>
        <name>Mg(2+)</name>
        <dbReference type="ChEBI" id="CHEBI:18420"/>
    </ligand>
</feature>
<feature type="binding site" evidence="1">
    <location>
        <position position="452"/>
    </location>
    <ligand>
        <name>Mg(2+)</name>
        <dbReference type="ChEBI" id="CHEBI:18420"/>
    </ligand>
</feature>
<feature type="binding site" evidence="1">
    <location>
        <position position="454"/>
    </location>
    <ligand>
        <name>Mg(2+)</name>
        <dbReference type="ChEBI" id="CHEBI:18420"/>
    </ligand>
</feature>
<feature type="binding site" evidence="1">
    <location>
        <position position="795"/>
    </location>
    <ligand>
        <name>Zn(2+)</name>
        <dbReference type="ChEBI" id="CHEBI:29105"/>
        <label>2</label>
    </ligand>
</feature>
<feature type="binding site" evidence="1">
    <location>
        <position position="869"/>
    </location>
    <ligand>
        <name>Zn(2+)</name>
        <dbReference type="ChEBI" id="CHEBI:29105"/>
        <label>2</label>
    </ligand>
</feature>
<feature type="binding site" evidence="1">
    <location>
        <position position="876"/>
    </location>
    <ligand>
        <name>Zn(2+)</name>
        <dbReference type="ChEBI" id="CHEBI:29105"/>
        <label>2</label>
    </ligand>
</feature>
<feature type="binding site" evidence="1">
    <location>
        <position position="879"/>
    </location>
    <ligand>
        <name>Zn(2+)</name>
        <dbReference type="ChEBI" id="CHEBI:29105"/>
        <label>2</label>
    </ligand>
</feature>
<dbReference type="EC" id="2.7.7.6" evidence="1"/>
<dbReference type="EMBL" id="CP000728">
    <property type="protein sequence ID" value="ABS41332.1"/>
    <property type="molecule type" value="Genomic_DNA"/>
</dbReference>
<dbReference type="RefSeq" id="WP_012101134.1">
    <property type="nucleotide sequence ID" value="NC_009699.1"/>
</dbReference>
<dbReference type="SMR" id="A7GJ81"/>
<dbReference type="KEGG" id="cbf:CLI_3670"/>
<dbReference type="HOGENOM" id="CLU_000524_3_1_9"/>
<dbReference type="Proteomes" id="UP000002410">
    <property type="component" value="Chromosome"/>
</dbReference>
<dbReference type="GO" id="GO:0000428">
    <property type="term" value="C:DNA-directed RNA polymerase complex"/>
    <property type="evidence" value="ECO:0007669"/>
    <property type="project" value="UniProtKB-KW"/>
</dbReference>
<dbReference type="GO" id="GO:0003677">
    <property type="term" value="F:DNA binding"/>
    <property type="evidence" value="ECO:0007669"/>
    <property type="project" value="UniProtKB-UniRule"/>
</dbReference>
<dbReference type="GO" id="GO:0003899">
    <property type="term" value="F:DNA-directed RNA polymerase activity"/>
    <property type="evidence" value="ECO:0007669"/>
    <property type="project" value="UniProtKB-UniRule"/>
</dbReference>
<dbReference type="GO" id="GO:0000287">
    <property type="term" value="F:magnesium ion binding"/>
    <property type="evidence" value="ECO:0007669"/>
    <property type="project" value="UniProtKB-UniRule"/>
</dbReference>
<dbReference type="GO" id="GO:0008270">
    <property type="term" value="F:zinc ion binding"/>
    <property type="evidence" value="ECO:0007669"/>
    <property type="project" value="UniProtKB-UniRule"/>
</dbReference>
<dbReference type="GO" id="GO:0006351">
    <property type="term" value="P:DNA-templated transcription"/>
    <property type="evidence" value="ECO:0007669"/>
    <property type="project" value="UniProtKB-UniRule"/>
</dbReference>
<dbReference type="CDD" id="cd02655">
    <property type="entry name" value="RNAP_beta'_C"/>
    <property type="match status" value="1"/>
</dbReference>
<dbReference type="CDD" id="cd01609">
    <property type="entry name" value="RNAP_beta'_N"/>
    <property type="match status" value="1"/>
</dbReference>
<dbReference type="FunFam" id="1.10.150.390:FF:000002">
    <property type="entry name" value="DNA-directed RNA polymerase subunit beta"/>
    <property type="match status" value="1"/>
</dbReference>
<dbReference type="FunFam" id="1.10.40.90:FF:000001">
    <property type="entry name" value="DNA-directed RNA polymerase subunit beta"/>
    <property type="match status" value="1"/>
</dbReference>
<dbReference type="FunFam" id="4.10.860.120:FF:000001">
    <property type="entry name" value="DNA-directed RNA polymerase subunit beta"/>
    <property type="match status" value="1"/>
</dbReference>
<dbReference type="Gene3D" id="1.10.132.30">
    <property type="match status" value="1"/>
</dbReference>
<dbReference type="Gene3D" id="1.10.150.390">
    <property type="match status" value="1"/>
</dbReference>
<dbReference type="Gene3D" id="1.10.1790.20">
    <property type="match status" value="1"/>
</dbReference>
<dbReference type="Gene3D" id="1.10.40.90">
    <property type="match status" value="1"/>
</dbReference>
<dbReference type="Gene3D" id="2.40.40.20">
    <property type="match status" value="1"/>
</dbReference>
<dbReference type="Gene3D" id="2.40.50.100">
    <property type="match status" value="1"/>
</dbReference>
<dbReference type="Gene3D" id="4.10.860.120">
    <property type="entry name" value="RNA polymerase II, clamp domain"/>
    <property type="match status" value="1"/>
</dbReference>
<dbReference type="Gene3D" id="1.10.274.100">
    <property type="entry name" value="RNA polymerase Rpb1, domain 3"/>
    <property type="match status" value="1"/>
</dbReference>
<dbReference type="HAMAP" id="MF_01322">
    <property type="entry name" value="RNApol_bact_RpoC"/>
    <property type="match status" value="1"/>
</dbReference>
<dbReference type="InterPro" id="IPR045867">
    <property type="entry name" value="DNA-dir_RpoC_beta_prime"/>
</dbReference>
<dbReference type="InterPro" id="IPR012754">
    <property type="entry name" value="DNA-dir_RpoC_beta_prime_bact"/>
</dbReference>
<dbReference type="InterPro" id="IPR000722">
    <property type="entry name" value="RNA_pol_asu"/>
</dbReference>
<dbReference type="InterPro" id="IPR006592">
    <property type="entry name" value="RNA_pol_N"/>
</dbReference>
<dbReference type="InterPro" id="IPR007080">
    <property type="entry name" value="RNA_pol_Rpb1_1"/>
</dbReference>
<dbReference type="InterPro" id="IPR007066">
    <property type="entry name" value="RNA_pol_Rpb1_3"/>
</dbReference>
<dbReference type="InterPro" id="IPR042102">
    <property type="entry name" value="RNA_pol_Rpb1_3_sf"/>
</dbReference>
<dbReference type="InterPro" id="IPR007083">
    <property type="entry name" value="RNA_pol_Rpb1_4"/>
</dbReference>
<dbReference type="InterPro" id="IPR007081">
    <property type="entry name" value="RNA_pol_Rpb1_5"/>
</dbReference>
<dbReference type="InterPro" id="IPR044893">
    <property type="entry name" value="RNA_pol_Rpb1_clamp_domain"/>
</dbReference>
<dbReference type="InterPro" id="IPR038120">
    <property type="entry name" value="Rpb1_funnel_sf"/>
</dbReference>
<dbReference type="NCBIfam" id="TIGR02386">
    <property type="entry name" value="rpoC_TIGR"/>
    <property type="match status" value="1"/>
</dbReference>
<dbReference type="PANTHER" id="PTHR19376">
    <property type="entry name" value="DNA-DIRECTED RNA POLYMERASE"/>
    <property type="match status" value="1"/>
</dbReference>
<dbReference type="PANTHER" id="PTHR19376:SF54">
    <property type="entry name" value="DNA-DIRECTED RNA POLYMERASE SUBUNIT BETA"/>
    <property type="match status" value="1"/>
</dbReference>
<dbReference type="Pfam" id="PF04997">
    <property type="entry name" value="RNA_pol_Rpb1_1"/>
    <property type="match status" value="1"/>
</dbReference>
<dbReference type="Pfam" id="PF00623">
    <property type="entry name" value="RNA_pol_Rpb1_2"/>
    <property type="match status" value="2"/>
</dbReference>
<dbReference type="Pfam" id="PF04983">
    <property type="entry name" value="RNA_pol_Rpb1_3"/>
    <property type="match status" value="1"/>
</dbReference>
<dbReference type="Pfam" id="PF05000">
    <property type="entry name" value="RNA_pol_Rpb1_4"/>
    <property type="match status" value="1"/>
</dbReference>
<dbReference type="Pfam" id="PF04998">
    <property type="entry name" value="RNA_pol_Rpb1_5"/>
    <property type="match status" value="1"/>
</dbReference>
<dbReference type="SMART" id="SM00663">
    <property type="entry name" value="RPOLA_N"/>
    <property type="match status" value="1"/>
</dbReference>
<dbReference type="SUPFAM" id="SSF64484">
    <property type="entry name" value="beta and beta-prime subunits of DNA dependent RNA-polymerase"/>
    <property type="match status" value="1"/>
</dbReference>
<reference key="1">
    <citation type="submission" date="2007-06" db="EMBL/GenBank/DDBJ databases">
        <authorList>
            <person name="Brinkac L.M."/>
            <person name="Daugherty S."/>
            <person name="Dodson R.J."/>
            <person name="Madupu R."/>
            <person name="Brown J.L."/>
            <person name="Bruce D."/>
            <person name="Detter C."/>
            <person name="Munk C."/>
            <person name="Smith L.A."/>
            <person name="Smith T.J."/>
            <person name="White O."/>
            <person name="Brettin T.S."/>
        </authorList>
    </citation>
    <scope>NUCLEOTIDE SEQUENCE [LARGE SCALE GENOMIC DNA]</scope>
    <source>
        <strain>Langeland / NCTC 10281 / Type F</strain>
    </source>
</reference>